<feature type="chain" id="PRO_0000148863" description="Aspartyl/glutamyl-tRNA(Asn/Gln) amidotransferase subunit B">
    <location>
        <begin position="1"/>
        <end position="504"/>
    </location>
</feature>
<accession>Q83GA2</accession>
<keyword id="KW-0067">ATP-binding</keyword>
<keyword id="KW-0436">Ligase</keyword>
<keyword id="KW-0547">Nucleotide-binding</keyword>
<keyword id="KW-0648">Protein biosynthesis</keyword>
<keyword id="KW-1185">Reference proteome</keyword>
<proteinExistence type="inferred from homology"/>
<protein>
    <recommendedName>
        <fullName evidence="1">Aspartyl/glutamyl-tRNA(Asn/Gln) amidotransferase subunit B</fullName>
        <shortName evidence="1">Asp/Glu-ADT subunit B</shortName>
        <ecNumber evidence="1">6.3.5.-</ecNumber>
    </recommendedName>
</protein>
<sequence>MSEVVTYEDALKDFEPIIGLEVHVELSTQTKLFSSAPNIAGPLASCASQGPNTLVTPVCLGLPGSLPTVNERAVDYGIALGLALGCSIADELIFARKNYFYPDLPKNYQISQFDSPLAYDGKLEVETESGDVFFVEIERAHLEEDAGKLAHKSSTGRIQGAQYSLIDYNRSGVPLVEIVSRPVFADRCAPQVARVFVELIREIVLSLGVSNARLERGNIRCDANVSLRPRGLGAGILPNRTETKNLNSLRSIERAIRYEIQRQATLISSGELVRQETRHWREDRGITLSGRVKADSHEYRYFPEPDLLPIPIPSDKVEAIRLSMPEHPLALRRRLKAEWKFSDLQFRDVLNSSVLKQVDETVRAGATPDGAKKWWTGEITRIASQRRCNASDLISPEAVAEIELLISKGILNDSLARKVLAAVIDESLSVQQAIEKYDLSLTESASVERVLEKVLSENQEVVQKVISGKTQAVGVLVGSCMKALGGKADASKLRQTILNRLLPR</sequence>
<name>GATB_TROWT</name>
<gene>
    <name evidence="1" type="primary">gatB</name>
    <name type="ordered locus">TWT_411</name>
</gene>
<evidence type="ECO:0000255" key="1">
    <source>
        <dbReference type="HAMAP-Rule" id="MF_00121"/>
    </source>
</evidence>
<dbReference type="EC" id="6.3.5.-" evidence="1"/>
<dbReference type="EMBL" id="AE014184">
    <property type="protein sequence ID" value="AAO44508.1"/>
    <property type="molecule type" value="Genomic_DNA"/>
</dbReference>
<dbReference type="RefSeq" id="WP_011102560.1">
    <property type="nucleotide sequence ID" value="NC_004572.3"/>
</dbReference>
<dbReference type="SMR" id="Q83GA2"/>
<dbReference type="STRING" id="203267.TWT_411"/>
<dbReference type="KEGG" id="twh:TWT_411"/>
<dbReference type="eggNOG" id="COG0064">
    <property type="taxonomic scope" value="Bacteria"/>
</dbReference>
<dbReference type="HOGENOM" id="CLU_019240_0_1_11"/>
<dbReference type="OrthoDB" id="9804078at2"/>
<dbReference type="Proteomes" id="UP000002200">
    <property type="component" value="Chromosome"/>
</dbReference>
<dbReference type="GO" id="GO:0050566">
    <property type="term" value="F:asparaginyl-tRNA synthase (glutamine-hydrolyzing) activity"/>
    <property type="evidence" value="ECO:0007669"/>
    <property type="project" value="RHEA"/>
</dbReference>
<dbReference type="GO" id="GO:0005524">
    <property type="term" value="F:ATP binding"/>
    <property type="evidence" value="ECO:0007669"/>
    <property type="project" value="UniProtKB-KW"/>
</dbReference>
<dbReference type="GO" id="GO:0050567">
    <property type="term" value="F:glutaminyl-tRNA synthase (glutamine-hydrolyzing) activity"/>
    <property type="evidence" value="ECO:0007669"/>
    <property type="project" value="UniProtKB-UniRule"/>
</dbReference>
<dbReference type="GO" id="GO:0070681">
    <property type="term" value="P:glutaminyl-tRNAGln biosynthesis via transamidation"/>
    <property type="evidence" value="ECO:0007669"/>
    <property type="project" value="TreeGrafter"/>
</dbReference>
<dbReference type="GO" id="GO:0006412">
    <property type="term" value="P:translation"/>
    <property type="evidence" value="ECO:0007669"/>
    <property type="project" value="UniProtKB-UniRule"/>
</dbReference>
<dbReference type="Gene3D" id="1.10.10.410">
    <property type="match status" value="1"/>
</dbReference>
<dbReference type="HAMAP" id="MF_00121">
    <property type="entry name" value="GatB"/>
    <property type="match status" value="1"/>
</dbReference>
<dbReference type="InterPro" id="IPR017959">
    <property type="entry name" value="Asn/Gln-tRNA_amidoTrfase_suB/E"/>
</dbReference>
<dbReference type="InterPro" id="IPR006075">
    <property type="entry name" value="Asn/Gln-tRNA_Trfase_suB/E_cat"/>
</dbReference>
<dbReference type="InterPro" id="IPR018027">
    <property type="entry name" value="Asn/Gln_amidotransferase"/>
</dbReference>
<dbReference type="InterPro" id="IPR003789">
    <property type="entry name" value="Asn/Gln_tRNA_amidoTrase-B-like"/>
</dbReference>
<dbReference type="InterPro" id="IPR004413">
    <property type="entry name" value="GatB"/>
</dbReference>
<dbReference type="InterPro" id="IPR023168">
    <property type="entry name" value="GatB_Yqey_C_2"/>
</dbReference>
<dbReference type="InterPro" id="IPR017958">
    <property type="entry name" value="Gln-tRNA_amidoTrfase_suB_CS"/>
</dbReference>
<dbReference type="InterPro" id="IPR014746">
    <property type="entry name" value="Gln_synth/guanido_kin_cat_dom"/>
</dbReference>
<dbReference type="NCBIfam" id="TIGR00133">
    <property type="entry name" value="gatB"/>
    <property type="match status" value="1"/>
</dbReference>
<dbReference type="NCBIfam" id="NF004012">
    <property type="entry name" value="PRK05477.1-2"/>
    <property type="match status" value="1"/>
</dbReference>
<dbReference type="NCBIfam" id="NF004013">
    <property type="entry name" value="PRK05477.1-3"/>
    <property type="match status" value="1"/>
</dbReference>
<dbReference type="NCBIfam" id="NF004014">
    <property type="entry name" value="PRK05477.1-4"/>
    <property type="match status" value="1"/>
</dbReference>
<dbReference type="PANTHER" id="PTHR11659">
    <property type="entry name" value="GLUTAMYL-TRNA GLN AMIDOTRANSFERASE SUBUNIT B MITOCHONDRIAL AND PROKARYOTIC PET112-RELATED"/>
    <property type="match status" value="1"/>
</dbReference>
<dbReference type="PANTHER" id="PTHR11659:SF0">
    <property type="entry name" value="GLUTAMYL-TRNA(GLN) AMIDOTRANSFERASE SUBUNIT B, MITOCHONDRIAL"/>
    <property type="match status" value="1"/>
</dbReference>
<dbReference type="Pfam" id="PF02934">
    <property type="entry name" value="GatB_N"/>
    <property type="match status" value="1"/>
</dbReference>
<dbReference type="Pfam" id="PF02637">
    <property type="entry name" value="GatB_Yqey"/>
    <property type="match status" value="1"/>
</dbReference>
<dbReference type="SMART" id="SM00845">
    <property type="entry name" value="GatB_Yqey"/>
    <property type="match status" value="1"/>
</dbReference>
<dbReference type="SUPFAM" id="SSF89095">
    <property type="entry name" value="GatB/YqeY motif"/>
    <property type="match status" value="1"/>
</dbReference>
<dbReference type="SUPFAM" id="SSF55931">
    <property type="entry name" value="Glutamine synthetase/guanido kinase"/>
    <property type="match status" value="1"/>
</dbReference>
<dbReference type="PROSITE" id="PS01234">
    <property type="entry name" value="GATB"/>
    <property type="match status" value="1"/>
</dbReference>
<reference key="1">
    <citation type="journal article" date="2003" name="Genome Res.">
        <title>Tropheryma whipplei twist: a human pathogenic Actinobacteria with a reduced genome.</title>
        <authorList>
            <person name="Raoult D."/>
            <person name="Ogata H."/>
            <person name="Audic S."/>
            <person name="Robert C."/>
            <person name="Suhre K."/>
            <person name="Drancourt M."/>
            <person name="Claverie J.-M."/>
        </authorList>
    </citation>
    <scope>NUCLEOTIDE SEQUENCE [LARGE SCALE GENOMIC DNA]</scope>
    <source>
        <strain>Twist</strain>
    </source>
</reference>
<comment type="function">
    <text evidence="1">Allows the formation of correctly charged Asn-tRNA(Asn) or Gln-tRNA(Gln) through the transamidation of misacylated Asp-tRNA(Asn) or Glu-tRNA(Gln) in organisms which lack either or both of asparaginyl-tRNA or glutaminyl-tRNA synthetases. The reaction takes place in the presence of glutamine and ATP through an activated phospho-Asp-tRNA(Asn) or phospho-Glu-tRNA(Gln).</text>
</comment>
<comment type="catalytic activity">
    <reaction evidence="1">
        <text>L-glutamyl-tRNA(Gln) + L-glutamine + ATP + H2O = L-glutaminyl-tRNA(Gln) + L-glutamate + ADP + phosphate + H(+)</text>
        <dbReference type="Rhea" id="RHEA:17521"/>
        <dbReference type="Rhea" id="RHEA-COMP:9681"/>
        <dbReference type="Rhea" id="RHEA-COMP:9684"/>
        <dbReference type="ChEBI" id="CHEBI:15377"/>
        <dbReference type="ChEBI" id="CHEBI:15378"/>
        <dbReference type="ChEBI" id="CHEBI:29985"/>
        <dbReference type="ChEBI" id="CHEBI:30616"/>
        <dbReference type="ChEBI" id="CHEBI:43474"/>
        <dbReference type="ChEBI" id="CHEBI:58359"/>
        <dbReference type="ChEBI" id="CHEBI:78520"/>
        <dbReference type="ChEBI" id="CHEBI:78521"/>
        <dbReference type="ChEBI" id="CHEBI:456216"/>
    </reaction>
</comment>
<comment type="catalytic activity">
    <reaction evidence="1">
        <text>L-aspartyl-tRNA(Asn) + L-glutamine + ATP + H2O = L-asparaginyl-tRNA(Asn) + L-glutamate + ADP + phosphate + 2 H(+)</text>
        <dbReference type="Rhea" id="RHEA:14513"/>
        <dbReference type="Rhea" id="RHEA-COMP:9674"/>
        <dbReference type="Rhea" id="RHEA-COMP:9677"/>
        <dbReference type="ChEBI" id="CHEBI:15377"/>
        <dbReference type="ChEBI" id="CHEBI:15378"/>
        <dbReference type="ChEBI" id="CHEBI:29985"/>
        <dbReference type="ChEBI" id="CHEBI:30616"/>
        <dbReference type="ChEBI" id="CHEBI:43474"/>
        <dbReference type="ChEBI" id="CHEBI:58359"/>
        <dbReference type="ChEBI" id="CHEBI:78515"/>
        <dbReference type="ChEBI" id="CHEBI:78516"/>
        <dbReference type="ChEBI" id="CHEBI:456216"/>
    </reaction>
</comment>
<comment type="subunit">
    <text evidence="1">Heterotrimer of A, B and C subunits.</text>
</comment>
<comment type="similarity">
    <text evidence="1">Belongs to the GatB/GatE family. GatB subfamily.</text>
</comment>
<organism>
    <name type="scientific">Tropheryma whipplei (strain Twist)</name>
    <name type="common">Whipple's bacillus</name>
    <dbReference type="NCBI Taxonomy" id="203267"/>
    <lineage>
        <taxon>Bacteria</taxon>
        <taxon>Bacillati</taxon>
        <taxon>Actinomycetota</taxon>
        <taxon>Actinomycetes</taxon>
        <taxon>Micrococcales</taxon>
        <taxon>Tropherymataceae</taxon>
        <taxon>Tropheryma</taxon>
    </lineage>
</organism>